<keyword id="KW-0891">Chondrogenesis</keyword>
<keyword id="KW-0165">Cleavage on pair of basic residues</keyword>
<keyword id="KW-0217">Developmental protein</keyword>
<keyword id="KW-0221">Differentiation</keyword>
<keyword id="KW-1015">Disulfide bond</keyword>
<keyword id="KW-0272">Extracellular matrix</keyword>
<keyword id="KW-0325">Glycoprotein</keyword>
<keyword id="KW-0472">Membrane</keyword>
<keyword id="KW-1185">Reference proteome</keyword>
<keyword id="KW-0964">Secreted</keyword>
<keyword id="KW-0812">Transmembrane</keyword>
<keyword id="KW-1133">Transmembrane helix</keyword>
<sequence>MEETAEKTPVEAYSTLKPKGLMKMKKTALVAFIAGAALLLFGGVGAFYLWKVTEKEAISAHLGRNIDIKIENDSDSAEGTIVEVQDFKAGITAVKFPGKEKCFIKSQARTELSEDEAGVKAEVASLVWITSEEPLKDSSFLSPEILRFCADLPIYWHHPANSRALRKRRSATRMRRQTSAGVNRQPARRRNSTASARDERPTGPEYNPENPYHQNQGSEGTMVFDPMLDHRGICCTECHRSYTHCERVCEPLGGYWPWPYNYHGCRPVCRLIMPCRWWAARVLGLV</sequence>
<dbReference type="EMBL" id="AF322374">
    <property type="protein sequence ID" value="AAK77023.1"/>
    <property type="molecule type" value="mRNA"/>
</dbReference>
<dbReference type="FunCoup" id="P58239">
    <property type="interactions" value="1128"/>
</dbReference>
<dbReference type="STRING" id="7955.ENSDARP00000136347"/>
<dbReference type="GlyCosmos" id="P58239">
    <property type="glycosylation" value="1 site, No reported glycans"/>
</dbReference>
<dbReference type="PaxDb" id="7955-ENSDARP00000022495"/>
<dbReference type="AGR" id="ZFIN:ZDB-GENE-010713-1"/>
<dbReference type="ZFIN" id="ZDB-GENE-010713-1">
    <property type="gene designation" value="cnmd"/>
</dbReference>
<dbReference type="eggNOG" id="ENOG502QVPC">
    <property type="taxonomic scope" value="Eukaryota"/>
</dbReference>
<dbReference type="InParanoid" id="P58239"/>
<dbReference type="PRO" id="PR:P58239"/>
<dbReference type="Proteomes" id="UP000000437">
    <property type="component" value="Unplaced"/>
</dbReference>
<dbReference type="GO" id="GO:0012505">
    <property type="term" value="C:endomembrane system"/>
    <property type="evidence" value="ECO:0007669"/>
    <property type="project" value="UniProtKB-SubCell"/>
</dbReference>
<dbReference type="GO" id="GO:0005576">
    <property type="term" value="C:extracellular region"/>
    <property type="evidence" value="ECO:0007669"/>
    <property type="project" value="UniProtKB-KW"/>
</dbReference>
<dbReference type="GO" id="GO:0016020">
    <property type="term" value="C:membrane"/>
    <property type="evidence" value="ECO:0007669"/>
    <property type="project" value="UniProtKB-KW"/>
</dbReference>
<dbReference type="GO" id="GO:0051216">
    <property type="term" value="P:cartilage development"/>
    <property type="evidence" value="ECO:0007669"/>
    <property type="project" value="UniProtKB-KW"/>
</dbReference>
<dbReference type="GO" id="GO:0030154">
    <property type="term" value="P:cell differentiation"/>
    <property type="evidence" value="ECO:0007669"/>
    <property type="project" value="UniProtKB-KW"/>
</dbReference>
<dbReference type="GO" id="GO:0016525">
    <property type="term" value="P:negative regulation of angiogenesis"/>
    <property type="evidence" value="ECO:0000318"/>
    <property type="project" value="GO_Central"/>
</dbReference>
<dbReference type="GO" id="GO:0001937">
    <property type="term" value="P:negative regulation of endothelial cell proliferation"/>
    <property type="evidence" value="ECO:0000318"/>
    <property type="project" value="GO_Central"/>
</dbReference>
<dbReference type="Gene3D" id="3.30.390.150">
    <property type="match status" value="1"/>
</dbReference>
<dbReference type="InterPro" id="IPR007084">
    <property type="entry name" value="BRICHOS_dom"/>
</dbReference>
<dbReference type="InterPro" id="IPR043405">
    <property type="entry name" value="Chondromodulin/Tenomodulin"/>
</dbReference>
<dbReference type="PANTHER" id="PTHR14064">
    <property type="entry name" value="CHONDROMODULIN-RELATED"/>
    <property type="match status" value="1"/>
</dbReference>
<dbReference type="PANTHER" id="PTHR14064:SF6">
    <property type="entry name" value="LEUKOCYTE CELL-DERIVED CHEMOTAXIN 1"/>
    <property type="match status" value="1"/>
</dbReference>
<dbReference type="Pfam" id="PF04089">
    <property type="entry name" value="BRICHOS"/>
    <property type="match status" value="1"/>
</dbReference>
<dbReference type="SMART" id="SM01039">
    <property type="entry name" value="BRICHOS"/>
    <property type="match status" value="1"/>
</dbReference>
<dbReference type="PROSITE" id="PS50869">
    <property type="entry name" value="BRICHOS"/>
    <property type="match status" value="1"/>
</dbReference>
<accession>P58239</accession>
<protein>
    <recommendedName>
        <fullName evidence="6">Leukocyte cell-derived chemotaxin 1</fullName>
    </recommendedName>
    <alternativeName>
        <fullName evidence="2">Chondromodulin</fullName>
    </alternativeName>
    <component>
        <recommendedName>
            <fullName>Chondrosurfactant protein</fullName>
            <shortName>CH-SP</shortName>
        </recommendedName>
    </component>
    <component>
        <recommendedName>
            <fullName>Chondromodulin-1</fullName>
        </recommendedName>
        <alternativeName>
            <fullName>Chondromodulin-I</fullName>
            <shortName>ChM-I</shortName>
        </alternativeName>
    </component>
</protein>
<evidence type="ECO:0000250" key="1"/>
<evidence type="ECO:0000250" key="2">
    <source>
        <dbReference type="UniProtKB" id="O75829"/>
    </source>
</evidence>
<evidence type="ECO:0000255" key="3"/>
<evidence type="ECO:0000255" key="4">
    <source>
        <dbReference type="PROSITE-ProRule" id="PRU00255"/>
    </source>
</evidence>
<evidence type="ECO:0000256" key="5">
    <source>
        <dbReference type="SAM" id="MobiDB-lite"/>
    </source>
</evidence>
<evidence type="ECO:0000305" key="6"/>
<organism>
    <name type="scientific">Danio rerio</name>
    <name type="common">Zebrafish</name>
    <name type="synonym">Brachydanio rerio</name>
    <dbReference type="NCBI Taxonomy" id="7955"/>
    <lineage>
        <taxon>Eukaryota</taxon>
        <taxon>Metazoa</taxon>
        <taxon>Chordata</taxon>
        <taxon>Craniata</taxon>
        <taxon>Vertebrata</taxon>
        <taxon>Euteleostomi</taxon>
        <taxon>Actinopterygii</taxon>
        <taxon>Neopterygii</taxon>
        <taxon>Teleostei</taxon>
        <taxon>Ostariophysi</taxon>
        <taxon>Cypriniformes</taxon>
        <taxon>Danionidae</taxon>
        <taxon>Danioninae</taxon>
        <taxon>Danio</taxon>
    </lineage>
</organism>
<feature type="chain" id="PRO_0000005361" description="Chondrosurfactant protein" evidence="1">
    <location>
        <begin position="1"/>
        <end position="165"/>
    </location>
</feature>
<feature type="propeptide" id="PRO_0000005362" evidence="3">
    <location>
        <begin position="166"/>
        <end position="169"/>
    </location>
</feature>
<feature type="chain" id="PRO_0000005363" description="Chondromodulin-1">
    <location>
        <begin position="170"/>
        <end position="286"/>
    </location>
</feature>
<feature type="transmembrane region" description="Helical" evidence="3">
    <location>
        <begin position="29"/>
        <end position="49"/>
    </location>
</feature>
<feature type="domain" description="BRICHOS" evidence="4">
    <location>
        <begin position="75"/>
        <end position="157"/>
    </location>
</feature>
<feature type="region of interest" description="Disordered" evidence="5">
    <location>
        <begin position="166"/>
        <end position="220"/>
    </location>
</feature>
<feature type="compositionally biased region" description="Basic residues" evidence="5">
    <location>
        <begin position="166"/>
        <end position="176"/>
    </location>
</feature>
<feature type="glycosylation site" description="N-linked (GlcNAc...) asparagine" evidence="3">
    <location>
        <position position="191"/>
    </location>
</feature>
<feature type="disulfide bond" evidence="1">
    <location>
        <begin position="102"/>
        <end position="149"/>
    </location>
</feature>
<feature type="disulfide bond" evidence="1">
    <location>
        <begin position="234"/>
        <end position="238"/>
    </location>
</feature>
<feature type="disulfide bond" evidence="1">
    <location>
        <begin position="235"/>
        <end position="275"/>
    </location>
</feature>
<feature type="disulfide bond" evidence="1">
    <location>
        <begin position="245"/>
        <end position="269"/>
    </location>
</feature>
<feature type="disulfide bond" evidence="1">
    <location>
        <begin position="249"/>
        <end position="265"/>
    </location>
</feature>
<proteinExistence type="evidence at transcript level"/>
<reference key="1">
    <citation type="journal article" date="2001" name="Mech. Dev.">
        <title>Sequence analysis of zebrafish chondromodulin-1 and expression profile in the notochord and chondrogenic regions during cartilage morphogenesis.</title>
        <authorList>
            <person name="Sachdev S.W."/>
            <person name="Dietz U.H."/>
            <person name="Oshima Y."/>
            <person name="Lang M.R."/>
            <person name="Knapik E.W."/>
            <person name="Hiraki Y."/>
            <person name="Shukunami C."/>
        </authorList>
    </citation>
    <scope>NUCLEOTIDE SEQUENCE [MRNA]</scope>
</reference>
<name>CNMD_DANRE</name>
<comment type="function">
    <text evidence="1">Bifunctional growth regulator. May contribute to the rapid growth of cartilage and vascular invasion prior to the replacement of cartilage by bone during endochondral bone development. Plays a role as antiangiogenic factor in cardiac valves to suppress neovascularization (By similarity).</text>
</comment>
<comment type="subcellular location">
    <molecule>Chondromodulin-1</molecule>
    <subcellularLocation>
        <location evidence="1">Secreted</location>
        <location evidence="1">Extracellular space</location>
        <location evidence="1">Extracellular matrix</location>
    </subcellularLocation>
    <text evidence="1">Accumulated in the inter-territorial matrix of cartilage.</text>
</comment>
<comment type="subcellular location">
    <molecule>Chondrosurfactant protein</molecule>
    <subcellularLocation>
        <location evidence="1">Endomembrane system</location>
        <topology evidence="1">Single-pass membrane protein</topology>
    </subcellularLocation>
</comment>
<comment type="PTM">
    <text evidence="1">After cleavage, the post-translationally modified ChM-I is secreted as a glycoprotein.</text>
</comment>
<comment type="similarity">
    <text evidence="6">Belongs to the chondromodulin-1 family.</text>
</comment>
<gene>
    <name evidence="2" type="primary">cnmd</name>
    <name type="synonym">chm1</name>
    <name type="synonym">chmi</name>
    <name type="synonym">lect1</name>
</gene>